<sequence>MGSNIRAQIEAQLKQRILLIDGGMGTMIQGYKLQEQDYRGERFADWHSDLKGNNDLLVLTQPQLIKEIHHAYLEAGADILETNTFNATTIAMADYDMESLSEEINFAAAKLAREAADEWTAKNPAKPRYVAGVLGPTNRTCSISPDVNDPGYRNVSFDELVEAYSESTRALIRGGSDLILIETIFDTLNAKACAFAVESVFEELGFALPVMISGTITDASGRTLSGQTTEAFYNSLRHVRPISFGLNCALGPDELRPYVEELSRISETFVSTHPNAGLPNAFGEYDLSPEEMAEHVKEWAQSGFLNLIGGCCGTTPEHIRHMAMAVEGESPRVLPEIPVACRLSGLEPLTIAKDTLFVNVGERTNVTGSARFKRLIKEELYDEALDVAREQVENGAQIIDINMDEGMLDAEACMVRFLNLCASEPEISKVPIMVDSSKWEVIEAGLKCIQGKGIVNSISLKEGKEKFVEQAKLIRRYGAAVIVMAFDEVGQADTRERKLEICTKAYRILVDEVGFPPEDVIFDPNIFAVATGIDEHNNYAVDFIEAVADIKRDLPHAMISGGVSNVSFSFRGNNYVREAIHAVFLYHCFKNGMDMGIVNAGQLEIYDNVPEKLREAVEDVVLNRRDDATERLLEIAEEYRENAVGKQEDASALEWRTWSVEKRLEHALVKGITEFIVEDTEEARLNASKPLEVIEGPLMDGMNVVGDLFGEGKMFLPQVVKSARVMKQAVAHLEPFINASKQVGSSNGKILLATVKGDVHDIGKNIVGVVLQCNNYEIIDLGVMVPCEQILKVAKEQQVDIIGLSGLITPSLDEMVHVAKEMERLGFDLPLLIGGATTSKAHTAVKIEQNYSHPVVYVNNASRAVGVCTSLLSDELRPAFVERLQADYELVRDQHNRKKPRTKPVTLEAARANKVAIDWQSYTPPAPSQPGVHVFDDFDVATLRQYIDWTPFFLTWSLVGKYPTIFEHEEVGEEAKRLFEDANEWLDRIEQEGLLKARGMCGLFPAASVGDDIEVYTDESRTQVAKVLHNLRQQTEKPKGANYCLSDYVAPKESGKKDWIGAFAVTGGVNERELADQFKAQGDDYNAIMIQAVADRLAEAFAEYLHERVRKEIWGYAADENLSNEELIREKYQGIRPAPGYPACPEHTEKGPLWELLNVEETIGMSLTSSYAMWPGASVSGWYFSHPDSRYFAIAQIQQDQVESYAKRKGWDLLEAEKWLGPNING</sequence>
<gene>
    <name type="primary">metH</name>
    <name type="ordered locus">VV2960</name>
</gene>
<organism>
    <name type="scientific">Vibrio vulnificus (strain YJ016)</name>
    <dbReference type="NCBI Taxonomy" id="196600"/>
    <lineage>
        <taxon>Bacteria</taxon>
        <taxon>Pseudomonadati</taxon>
        <taxon>Pseudomonadota</taxon>
        <taxon>Gammaproteobacteria</taxon>
        <taxon>Vibrionales</taxon>
        <taxon>Vibrionaceae</taxon>
        <taxon>Vibrio</taxon>
    </lineage>
</organism>
<proteinExistence type="inferred from homology"/>
<comment type="function">
    <text evidence="1">Catalyzes the transfer of a methyl group from methyl-cobalamin to homocysteine, yielding enzyme-bound cob(I)alamin and methionine. Subsequently, remethylates the cofactor using methyltetrahydrofolate (By similarity).</text>
</comment>
<comment type="catalytic activity">
    <reaction>
        <text>(6S)-5-methyl-5,6,7,8-tetrahydrofolate + L-homocysteine = (6S)-5,6,7,8-tetrahydrofolate + L-methionine</text>
        <dbReference type="Rhea" id="RHEA:11172"/>
        <dbReference type="ChEBI" id="CHEBI:18608"/>
        <dbReference type="ChEBI" id="CHEBI:57453"/>
        <dbReference type="ChEBI" id="CHEBI:57844"/>
        <dbReference type="ChEBI" id="CHEBI:58199"/>
        <dbReference type="EC" id="2.1.1.13"/>
    </reaction>
</comment>
<comment type="cofactor">
    <cofactor evidence="1">
        <name>methylcob(III)alamin</name>
        <dbReference type="ChEBI" id="CHEBI:28115"/>
    </cofactor>
</comment>
<comment type="cofactor">
    <cofactor evidence="1">
        <name>Zn(2+)</name>
        <dbReference type="ChEBI" id="CHEBI:29105"/>
    </cofactor>
    <text evidence="1">Binds 1 zinc ion per subunit.</text>
</comment>
<comment type="pathway">
    <text>Amino-acid biosynthesis; L-methionine biosynthesis via de novo pathway; L-methionine from L-homocysteine (MetH route): step 1/1.</text>
</comment>
<comment type="domain">
    <text evidence="1">Modular enzyme with four functionally distinct domains. The isolated Hcy-binding domain catalyzes methyl transfer from free methylcobalamin to homocysteine. The Hcy-binding domain in association with the pterin-binding domain catalyzes the methylation of cob(I)alamin by methyltetrahydrofolate and the methylation of homocysteine. The B12-binding domain binds the cofactor. The AdoMet activation domain binds S-adenosyl-L-methionine. Under aerobic conditions cob(I)alamin can be converted to inactive cob(II)alamin. Reductive methylation by S-adenosyl-L-methionine and flavodoxin regenerates methylcobalamin (By similarity).</text>
</comment>
<comment type="miscellaneous">
    <text evidence="1">L-homocysteine is bound via the zinc atom.</text>
</comment>
<comment type="similarity">
    <text evidence="8">Belongs to the vitamin-B12 dependent methionine synthase family.</text>
</comment>
<protein>
    <recommendedName>
        <fullName>Methionine synthase</fullName>
        <ecNumber>2.1.1.13</ecNumber>
    </recommendedName>
    <alternativeName>
        <fullName>5-methyltetrahydrofolate--homocysteine methyltransferase</fullName>
    </alternativeName>
    <alternativeName>
        <fullName>Methionine synthase, vitamin-B12 dependent</fullName>
        <shortName>MS</shortName>
    </alternativeName>
</protein>
<feature type="chain" id="PRO_0000204543" description="Methionine synthase">
    <location>
        <begin position="1"/>
        <end position="1226"/>
    </location>
</feature>
<feature type="domain" description="Hcy-binding" evidence="3">
    <location>
        <begin position="6"/>
        <end position="326"/>
    </location>
</feature>
<feature type="domain" description="Pterin-binding" evidence="4">
    <location>
        <begin position="357"/>
        <end position="618"/>
    </location>
</feature>
<feature type="domain" description="B12-binding N-terminal" evidence="7">
    <location>
        <begin position="651"/>
        <end position="745"/>
    </location>
</feature>
<feature type="domain" description="B12-binding" evidence="6">
    <location>
        <begin position="747"/>
        <end position="882"/>
    </location>
</feature>
<feature type="domain" description="AdoMet activation" evidence="5">
    <location>
        <begin position="898"/>
        <end position="1226"/>
    </location>
</feature>
<feature type="binding site" evidence="3">
    <location>
        <position position="248"/>
    </location>
    <ligand>
        <name>Zn(2+)</name>
        <dbReference type="ChEBI" id="CHEBI:29105"/>
    </ligand>
</feature>
<feature type="binding site" evidence="3">
    <location>
        <position position="311"/>
    </location>
    <ligand>
        <name>Zn(2+)</name>
        <dbReference type="ChEBI" id="CHEBI:29105"/>
    </ligand>
</feature>
<feature type="binding site" evidence="3">
    <location>
        <position position="312"/>
    </location>
    <ligand>
        <name>Zn(2+)</name>
        <dbReference type="ChEBI" id="CHEBI:29105"/>
    </ligand>
</feature>
<feature type="binding site" evidence="2">
    <location>
        <position position="695"/>
    </location>
    <ligand>
        <name>methylcob(III)alamin</name>
        <dbReference type="ChEBI" id="CHEBI:28115"/>
    </ligand>
</feature>
<feature type="binding site" evidence="2">
    <location>
        <begin position="757"/>
        <end position="761"/>
    </location>
    <ligand>
        <name>methylcob(III)alamin</name>
        <dbReference type="ChEBI" id="CHEBI:28115"/>
    </ligand>
</feature>
<feature type="binding site" description="axial binding residue" evidence="2">
    <location>
        <position position="760"/>
    </location>
    <ligand>
        <name>methylcob(III)alamin</name>
        <dbReference type="ChEBI" id="CHEBI:28115"/>
    </ligand>
    <ligandPart>
        <name>Co</name>
        <dbReference type="ChEBI" id="CHEBI:27638"/>
    </ligandPart>
</feature>
<feature type="binding site" evidence="2">
    <location>
        <position position="805"/>
    </location>
    <ligand>
        <name>methylcob(III)alamin</name>
        <dbReference type="ChEBI" id="CHEBI:28115"/>
    </ligand>
</feature>
<feature type="binding site" evidence="2">
    <location>
        <position position="809"/>
    </location>
    <ligand>
        <name>methylcob(III)alamin</name>
        <dbReference type="ChEBI" id="CHEBI:28115"/>
    </ligand>
</feature>
<feature type="binding site" evidence="2">
    <location>
        <position position="861"/>
    </location>
    <ligand>
        <name>methylcob(III)alamin</name>
        <dbReference type="ChEBI" id="CHEBI:28115"/>
    </ligand>
</feature>
<feature type="binding site" evidence="1">
    <location>
        <position position="948"/>
    </location>
    <ligand>
        <name>S-adenosyl-L-methionine</name>
        <dbReference type="ChEBI" id="CHEBI:59789"/>
    </ligand>
</feature>
<feature type="binding site" evidence="1">
    <location>
        <position position="1136"/>
    </location>
    <ligand>
        <name>S-adenosyl-L-methionine</name>
        <dbReference type="ChEBI" id="CHEBI:59789"/>
    </ligand>
</feature>
<feature type="binding site" evidence="1">
    <location>
        <begin position="1191"/>
        <end position="1192"/>
    </location>
    <ligand>
        <name>S-adenosyl-L-methionine</name>
        <dbReference type="ChEBI" id="CHEBI:59789"/>
    </ligand>
</feature>
<reference key="1">
    <citation type="journal article" date="2003" name="Genome Res.">
        <title>Comparative genome analysis of Vibrio vulnificus, a marine pathogen.</title>
        <authorList>
            <person name="Chen C.-Y."/>
            <person name="Wu K.-M."/>
            <person name="Chang Y.-C."/>
            <person name="Chang C.-H."/>
            <person name="Tsai H.-C."/>
            <person name="Liao T.-L."/>
            <person name="Liu Y.-M."/>
            <person name="Chen H.-J."/>
            <person name="Shen A.B.-T."/>
            <person name="Li J.-C."/>
            <person name="Su T.-L."/>
            <person name="Shao C.-P."/>
            <person name="Lee C.-T."/>
            <person name="Hor L.-I."/>
            <person name="Tsai S.-F."/>
        </authorList>
    </citation>
    <scope>NUCLEOTIDE SEQUENCE [LARGE SCALE GENOMIC DNA]</scope>
    <source>
        <strain>YJ016</strain>
    </source>
</reference>
<dbReference type="EC" id="2.1.1.13"/>
<dbReference type="EMBL" id="BA000037">
    <property type="protein sequence ID" value="BAC95724.1"/>
    <property type="molecule type" value="Genomic_DNA"/>
</dbReference>
<dbReference type="RefSeq" id="WP_011151258.1">
    <property type="nucleotide sequence ID" value="NC_005139.1"/>
</dbReference>
<dbReference type="SMR" id="Q7MHB1"/>
<dbReference type="STRING" id="672.VV93_v1c26820"/>
<dbReference type="KEGG" id="vvy:VV2960"/>
<dbReference type="PATRIC" id="fig|196600.6.peg.2940"/>
<dbReference type="eggNOG" id="COG0646">
    <property type="taxonomic scope" value="Bacteria"/>
</dbReference>
<dbReference type="eggNOG" id="COG1410">
    <property type="taxonomic scope" value="Bacteria"/>
</dbReference>
<dbReference type="HOGENOM" id="CLU_004914_2_2_6"/>
<dbReference type="UniPathway" id="UPA00051">
    <property type="reaction ID" value="UER00081"/>
</dbReference>
<dbReference type="Proteomes" id="UP000002675">
    <property type="component" value="Chromosome I"/>
</dbReference>
<dbReference type="GO" id="GO:0005829">
    <property type="term" value="C:cytosol"/>
    <property type="evidence" value="ECO:0007669"/>
    <property type="project" value="TreeGrafter"/>
</dbReference>
<dbReference type="GO" id="GO:0031419">
    <property type="term" value="F:cobalamin binding"/>
    <property type="evidence" value="ECO:0007669"/>
    <property type="project" value="UniProtKB-KW"/>
</dbReference>
<dbReference type="GO" id="GO:0008705">
    <property type="term" value="F:methionine synthase activity"/>
    <property type="evidence" value="ECO:0007669"/>
    <property type="project" value="UniProtKB-EC"/>
</dbReference>
<dbReference type="GO" id="GO:0008270">
    <property type="term" value="F:zinc ion binding"/>
    <property type="evidence" value="ECO:0007669"/>
    <property type="project" value="InterPro"/>
</dbReference>
<dbReference type="GO" id="GO:0050667">
    <property type="term" value="P:homocysteine metabolic process"/>
    <property type="evidence" value="ECO:0007669"/>
    <property type="project" value="TreeGrafter"/>
</dbReference>
<dbReference type="GO" id="GO:0032259">
    <property type="term" value="P:methylation"/>
    <property type="evidence" value="ECO:0007669"/>
    <property type="project" value="UniProtKB-KW"/>
</dbReference>
<dbReference type="GO" id="GO:0046653">
    <property type="term" value="P:tetrahydrofolate metabolic process"/>
    <property type="evidence" value="ECO:0007669"/>
    <property type="project" value="TreeGrafter"/>
</dbReference>
<dbReference type="CDD" id="cd02069">
    <property type="entry name" value="methionine_synthase_B12_BD"/>
    <property type="match status" value="1"/>
</dbReference>
<dbReference type="CDD" id="cd00740">
    <property type="entry name" value="MeTr"/>
    <property type="match status" value="1"/>
</dbReference>
<dbReference type="FunFam" id="1.10.1240.10:FF:000001">
    <property type="entry name" value="Methionine synthase"/>
    <property type="match status" value="1"/>
</dbReference>
<dbReference type="FunFam" id="3.20.20.20:FF:000002">
    <property type="entry name" value="Methionine synthase"/>
    <property type="match status" value="1"/>
</dbReference>
<dbReference type="FunFam" id="3.20.20.330:FF:000001">
    <property type="entry name" value="Methionine synthase"/>
    <property type="match status" value="1"/>
</dbReference>
<dbReference type="FunFam" id="3.40.50.280:FF:000001">
    <property type="entry name" value="Methionine synthase"/>
    <property type="match status" value="1"/>
</dbReference>
<dbReference type="Gene3D" id="3.40.50.280">
    <property type="entry name" value="Cobalamin-binding domain"/>
    <property type="match status" value="1"/>
</dbReference>
<dbReference type="Gene3D" id="1.10.288.10">
    <property type="entry name" value="Cobalamin-dependent Methionine Synthase, domain 2"/>
    <property type="match status" value="1"/>
</dbReference>
<dbReference type="Gene3D" id="3.20.20.20">
    <property type="entry name" value="Dihydropteroate synthase-like"/>
    <property type="match status" value="1"/>
</dbReference>
<dbReference type="Gene3D" id="3.20.20.330">
    <property type="entry name" value="Homocysteine-binding-like domain"/>
    <property type="match status" value="1"/>
</dbReference>
<dbReference type="Gene3D" id="1.10.1240.10">
    <property type="entry name" value="Methionine synthase domain"/>
    <property type="match status" value="1"/>
</dbReference>
<dbReference type="Gene3D" id="3.10.196.10">
    <property type="entry name" value="Vitamin B12-dependent methionine synthase, activation domain"/>
    <property type="match status" value="1"/>
</dbReference>
<dbReference type="InterPro" id="IPR003759">
    <property type="entry name" value="Cbl-bd_cap"/>
</dbReference>
<dbReference type="InterPro" id="IPR006158">
    <property type="entry name" value="Cobalamin-bd"/>
</dbReference>
<dbReference type="InterPro" id="IPR036724">
    <property type="entry name" value="Cobalamin-bd_sf"/>
</dbReference>
<dbReference type="InterPro" id="IPR011005">
    <property type="entry name" value="Dihydropteroate_synth-like_sf"/>
</dbReference>
<dbReference type="InterPro" id="IPR003726">
    <property type="entry name" value="HCY_dom"/>
</dbReference>
<dbReference type="InterPro" id="IPR036589">
    <property type="entry name" value="HCY_dom_sf"/>
</dbReference>
<dbReference type="InterPro" id="IPR050554">
    <property type="entry name" value="Met_Synthase/Corrinoid"/>
</dbReference>
<dbReference type="InterPro" id="IPR033706">
    <property type="entry name" value="Met_synthase_B12-bd"/>
</dbReference>
<dbReference type="InterPro" id="IPR011822">
    <property type="entry name" value="MetH"/>
</dbReference>
<dbReference type="InterPro" id="IPR036594">
    <property type="entry name" value="Meth_synthase_dom"/>
</dbReference>
<dbReference type="InterPro" id="IPR000489">
    <property type="entry name" value="Pterin-binding_dom"/>
</dbReference>
<dbReference type="InterPro" id="IPR004223">
    <property type="entry name" value="VitB12-dep_Met_synth_activ_dom"/>
</dbReference>
<dbReference type="InterPro" id="IPR037010">
    <property type="entry name" value="VitB12-dep_Met_synth_activ_sf"/>
</dbReference>
<dbReference type="NCBIfam" id="TIGR02082">
    <property type="entry name" value="metH"/>
    <property type="match status" value="1"/>
</dbReference>
<dbReference type="NCBIfam" id="NF007024">
    <property type="entry name" value="PRK09490.1"/>
    <property type="match status" value="1"/>
</dbReference>
<dbReference type="PANTHER" id="PTHR45833">
    <property type="entry name" value="METHIONINE SYNTHASE"/>
    <property type="match status" value="1"/>
</dbReference>
<dbReference type="PANTHER" id="PTHR45833:SF1">
    <property type="entry name" value="METHIONINE SYNTHASE"/>
    <property type="match status" value="1"/>
</dbReference>
<dbReference type="Pfam" id="PF02310">
    <property type="entry name" value="B12-binding"/>
    <property type="match status" value="1"/>
</dbReference>
<dbReference type="Pfam" id="PF02607">
    <property type="entry name" value="B12-binding_2"/>
    <property type="match status" value="1"/>
</dbReference>
<dbReference type="Pfam" id="PF02965">
    <property type="entry name" value="Met_synt_B12"/>
    <property type="match status" value="1"/>
</dbReference>
<dbReference type="Pfam" id="PF00809">
    <property type="entry name" value="Pterin_bind"/>
    <property type="match status" value="1"/>
</dbReference>
<dbReference type="Pfam" id="PF02574">
    <property type="entry name" value="S-methyl_trans"/>
    <property type="match status" value="1"/>
</dbReference>
<dbReference type="PIRSF" id="PIRSF000381">
    <property type="entry name" value="MetH"/>
    <property type="match status" value="1"/>
</dbReference>
<dbReference type="SMART" id="SM01018">
    <property type="entry name" value="B12-binding_2"/>
    <property type="match status" value="1"/>
</dbReference>
<dbReference type="SUPFAM" id="SSF52242">
    <property type="entry name" value="Cobalamin (vitamin B12)-binding domain"/>
    <property type="match status" value="1"/>
</dbReference>
<dbReference type="SUPFAM" id="SSF51717">
    <property type="entry name" value="Dihydropteroate synthetase-like"/>
    <property type="match status" value="1"/>
</dbReference>
<dbReference type="SUPFAM" id="SSF82282">
    <property type="entry name" value="Homocysteine S-methyltransferase"/>
    <property type="match status" value="1"/>
</dbReference>
<dbReference type="SUPFAM" id="SSF56507">
    <property type="entry name" value="Methionine synthase activation domain-like"/>
    <property type="match status" value="1"/>
</dbReference>
<dbReference type="SUPFAM" id="SSF47644">
    <property type="entry name" value="Methionine synthase domain"/>
    <property type="match status" value="1"/>
</dbReference>
<dbReference type="PROSITE" id="PS50974">
    <property type="entry name" value="ADOMET_ACTIVATION"/>
    <property type="match status" value="1"/>
</dbReference>
<dbReference type="PROSITE" id="PS51332">
    <property type="entry name" value="B12_BINDING"/>
    <property type="match status" value="1"/>
</dbReference>
<dbReference type="PROSITE" id="PS51337">
    <property type="entry name" value="B12_BINDING_NTER"/>
    <property type="match status" value="1"/>
</dbReference>
<dbReference type="PROSITE" id="PS50970">
    <property type="entry name" value="HCY"/>
    <property type="match status" value="1"/>
</dbReference>
<dbReference type="PROSITE" id="PS50972">
    <property type="entry name" value="PTERIN_BINDING"/>
    <property type="match status" value="1"/>
</dbReference>
<keyword id="KW-0028">Amino-acid biosynthesis</keyword>
<keyword id="KW-0846">Cobalamin</keyword>
<keyword id="KW-0170">Cobalt</keyword>
<keyword id="KW-0479">Metal-binding</keyword>
<keyword id="KW-0486">Methionine biosynthesis</keyword>
<keyword id="KW-0489">Methyltransferase</keyword>
<keyword id="KW-0677">Repeat</keyword>
<keyword id="KW-0949">S-adenosyl-L-methionine</keyword>
<keyword id="KW-0808">Transferase</keyword>
<keyword id="KW-0862">Zinc</keyword>
<accession>Q7MHB1</accession>
<evidence type="ECO:0000250" key="1"/>
<evidence type="ECO:0000250" key="2">
    <source>
        <dbReference type="UniProtKB" id="P13009"/>
    </source>
</evidence>
<evidence type="ECO:0000255" key="3">
    <source>
        <dbReference type="PROSITE-ProRule" id="PRU00333"/>
    </source>
</evidence>
<evidence type="ECO:0000255" key="4">
    <source>
        <dbReference type="PROSITE-ProRule" id="PRU00334"/>
    </source>
</evidence>
<evidence type="ECO:0000255" key="5">
    <source>
        <dbReference type="PROSITE-ProRule" id="PRU00346"/>
    </source>
</evidence>
<evidence type="ECO:0000255" key="6">
    <source>
        <dbReference type="PROSITE-ProRule" id="PRU00666"/>
    </source>
</evidence>
<evidence type="ECO:0000255" key="7">
    <source>
        <dbReference type="PROSITE-ProRule" id="PRU00667"/>
    </source>
</evidence>
<evidence type="ECO:0000305" key="8"/>
<name>METH_VIBVY</name>